<proteinExistence type="evidence at protein level"/>
<feature type="chain" id="PRO_0000398351" description="SPX domain-containing protein 3">
    <location>
        <begin position="1"/>
        <end position="277"/>
    </location>
</feature>
<feature type="domain" description="SPX" evidence="1">
    <location>
        <begin position="1"/>
        <end position="152"/>
    </location>
</feature>
<name>SPX3_ORYSJ</name>
<gene>
    <name type="primary">SPX3</name>
    <name type="ordered locus">Os10g0392600</name>
    <name type="ordered locus">LOC_Os10g25310</name>
    <name type="ORF">OsJ_31398</name>
</gene>
<organism>
    <name type="scientific">Oryza sativa subsp. japonica</name>
    <name type="common">Rice</name>
    <dbReference type="NCBI Taxonomy" id="39947"/>
    <lineage>
        <taxon>Eukaryota</taxon>
        <taxon>Viridiplantae</taxon>
        <taxon>Streptophyta</taxon>
        <taxon>Embryophyta</taxon>
        <taxon>Tracheophyta</taxon>
        <taxon>Spermatophyta</taxon>
        <taxon>Magnoliopsida</taxon>
        <taxon>Liliopsida</taxon>
        <taxon>Poales</taxon>
        <taxon>Poaceae</taxon>
        <taxon>BOP clade</taxon>
        <taxon>Oryzoideae</taxon>
        <taxon>Oryzeae</taxon>
        <taxon>Oryzinae</taxon>
        <taxon>Oryza</taxon>
        <taxon>Oryza sativa</taxon>
    </lineage>
</organism>
<reference key="1">
    <citation type="journal article" date="2003" name="Science">
        <title>In-depth view of structure, activity, and evolution of rice chromosome 10.</title>
        <authorList>
            <person name="Yu Y."/>
            <person name="Rambo T."/>
            <person name="Currie J."/>
            <person name="Saski C."/>
            <person name="Kim H.-R."/>
            <person name="Collura K."/>
            <person name="Thompson S."/>
            <person name="Simmons J."/>
            <person name="Yang T.-J."/>
            <person name="Nah G."/>
            <person name="Patel A.J."/>
            <person name="Thurmond S."/>
            <person name="Henry D."/>
            <person name="Oates R."/>
            <person name="Palmer M."/>
            <person name="Pries G."/>
            <person name="Gibson J."/>
            <person name="Anderson H."/>
            <person name="Paradkar M."/>
            <person name="Crane L."/>
            <person name="Dale J."/>
            <person name="Carver M.B."/>
            <person name="Wood T."/>
            <person name="Frisch D."/>
            <person name="Engler F."/>
            <person name="Soderlund C."/>
            <person name="Palmer L.E."/>
            <person name="Teytelman L."/>
            <person name="Nascimento L."/>
            <person name="De la Bastide M."/>
            <person name="Spiegel L."/>
            <person name="Ware D."/>
            <person name="O'Shaughnessy A."/>
            <person name="Dike S."/>
            <person name="Dedhia N."/>
            <person name="Preston R."/>
            <person name="Huang E."/>
            <person name="Ferraro K."/>
            <person name="Kuit K."/>
            <person name="Miller B."/>
            <person name="Zutavern T."/>
            <person name="Katzenberger F."/>
            <person name="Muller S."/>
            <person name="Balija V."/>
            <person name="Martienssen R.A."/>
            <person name="Stein L."/>
            <person name="Minx P."/>
            <person name="Johnson D."/>
            <person name="Cordum H."/>
            <person name="Mardis E."/>
            <person name="Cheng Z."/>
            <person name="Jiang J."/>
            <person name="Wilson R."/>
            <person name="McCombie W.R."/>
            <person name="Wing R.A."/>
            <person name="Yuan Q."/>
            <person name="Ouyang S."/>
            <person name="Liu J."/>
            <person name="Jones K.M."/>
            <person name="Gansberger K."/>
            <person name="Moffat K."/>
            <person name="Hill J."/>
            <person name="Tsitrin T."/>
            <person name="Overton L."/>
            <person name="Bera J."/>
            <person name="Kim M."/>
            <person name="Jin S."/>
            <person name="Tallon L."/>
            <person name="Ciecko A."/>
            <person name="Pai G."/>
            <person name="Van Aken S."/>
            <person name="Utterback T."/>
            <person name="Reidmuller S."/>
            <person name="Bormann J."/>
            <person name="Feldblyum T."/>
            <person name="Hsiao J."/>
            <person name="Zismann V."/>
            <person name="Blunt S."/>
            <person name="de Vazeille A.R."/>
            <person name="Shaffer T."/>
            <person name="Koo H."/>
            <person name="Suh B."/>
            <person name="Yang Q."/>
            <person name="Haas B."/>
            <person name="Peterson J."/>
            <person name="Pertea M."/>
            <person name="Volfovsky N."/>
            <person name="Wortman J."/>
            <person name="White O."/>
            <person name="Salzberg S.L."/>
            <person name="Fraser C.M."/>
            <person name="Buell C.R."/>
            <person name="Messing J."/>
            <person name="Song R."/>
            <person name="Fuks G."/>
            <person name="Llaca V."/>
            <person name="Kovchak S."/>
            <person name="Young S."/>
            <person name="Bowers J.E."/>
            <person name="Paterson A.H."/>
            <person name="Johns M.A."/>
            <person name="Mao L."/>
            <person name="Pan H."/>
            <person name="Dean R.A."/>
        </authorList>
    </citation>
    <scope>NUCLEOTIDE SEQUENCE [LARGE SCALE GENOMIC DNA]</scope>
    <source>
        <strain>cv. Nipponbare</strain>
    </source>
</reference>
<reference key="2">
    <citation type="journal article" date="2005" name="Nature">
        <title>The map-based sequence of the rice genome.</title>
        <authorList>
            <consortium name="International rice genome sequencing project (IRGSP)"/>
        </authorList>
    </citation>
    <scope>NUCLEOTIDE SEQUENCE [LARGE SCALE GENOMIC DNA]</scope>
    <source>
        <strain>cv. Nipponbare</strain>
    </source>
</reference>
<reference key="3">
    <citation type="journal article" date="2008" name="Nucleic Acids Res.">
        <title>The rice annotation project database (RAP-DB): 2008 update.</title>
        <authorList>
            <consortium name="The rice annotation project (RAP)"/>
        </authorList>
    </citation>
    <scope>GENOME REANNOTATION</scope>
    <source>
        <strain>cv. Nipponbare</strain>
    </source>
</reference>
<reference key="4">
    <citation type="journal article" date="2013" name="Rice">
        <title>Improvement of the Oryza sativa Nipponbare reference genome using next generation sequence and optical map data.</title>
        <authorList>
            <person name="Kawahara Y."/>
            <person name="de la Bastide M."/>
            <person name="Hamilton J.P."/>
            <person name="Kanamori H."/>
            <person name="McCombie W.R."/>
            <person name="Ouyang S."/>
            <person name="Schwartz D.C."/>
            <person name="Tanaka T."/>
            <person name="Wu J."/>
            <person name="Zhou S."/>
            <person name="Childs K.L."/>
            <person name="Davidson R.M."/>
            <person name="Lin H."/>
            <person name="Quesada-Ocampo L."/>
            <person name="Vaillancourt B."/>
            <person name="Sakai H."/>
            <person name="Lee S.S."/>
            <person name="Kim J."/>
            <person name="Numa H."/>
            <person name="Itoh T."/>
            <person name="Buell C.R."/>
            <person name="Matsumoto T."/>
        </authorList>
    </citation>
    <scope>GENOME REANNOTATION</scope>
    <source>
        <strain>cv. Nipponbare</strain>
    </source>
</reference>
<reference key="5">
    <citation type="journal article" date="2005" name="PLoS Biol.">
        <title>The genomes of Oryza sativa: a history of duplications.</title>
        <authorList>
            <person name="Yu J."/>
            <person name="Wang J."/>
            <person name="Lin W."/>
            <person name="Li S."/>
            <person name="Li H."/>
            <person name="Zhou J."/>
            <person name="Ni P."/>
            <person name="Dong W."/>
            <person name="Hu S."/>
            <person name="Zeng C."/>
            <person name="Zhang J."/>
            <person name="Zhang Y."/>
            <person name="Li R."/>
            <person name="Xu Z."/>
            <person name="Li S."/>
            <person name="Li X."/>
            <person name="Zheng H."/>
            <person name="Cong L."/>
            <person name="Lin L."/>
            <person name="Yin J."/>
            <person name="Geng J."/>
            <person name="Li G."/>
            <person name="Shi J."/>
            <person name="Liu J."/>
            <person name="Lv H."/>
            <person name="Li J."/>
            <person name="Wang J."/>
            <person name="Deng Y."/>
            <person name="Ran L."/>
            <person name="Shi X."/>
            <person name="Wang X."/>
            <person name="Wu Q."/>
            <person name="Li C."/>
            <person name="Ren X."/>
            <person name="Wang J."/>
            <person name="Wang X."/>
            <person name="Li D."/>
            <person name="Liu D."/>
            <person name="Zhang X."/>
            <person name="Ji Z."/>
            <person name="Zhao W."/>
            <person name="Sun Y."/>
            <person name="Zhang Z."/>
            <person name="Bao J."/>
            <person name="Han Y."/>
            <person name="Dong L."/>
            <person name="Ji J."/>
            <person name="Chen P."/>
            <person name="Wu S."/>
            <person name="Liu J."/>
            <person name="Xiao Y."/>
            <person name="Bu D."/>
            <person name="Tan J."/>
            <person name="Yang L."/>
            <person name="Ye C."/>
            <person name="Zhang J."/>
            <person name="Xu J."/>
            <person name="Zhou Y."/>
            <person name="Yu Y."/>
            <person name="Zhang B."/>
            <person name="Zhuang S."/>
            <person name="Wei H."/>
            <person name="Liu B."/>
            <person name="Lei M."/>
            <person name="Yu H."/>
            <person name="Li Y."/>
            <person name="Xu H."/>
            <person name="Wei S."/>
            <person name="He X."/>
            <person name="Fang L."/>
            <person name="Zhang Z."/>
            <person name="Zhang Y."/>
            <person name="Huang X."/>
            <person name="Su Z."/>
            <person name="Tong W."/>
            <person name="Li J."/>
            <person name="Tong Z."/>
            <person name="Li S."/>
            <person name="Ye J."/>
            <person name="Wang L."/>
            <person name="Fang L."/>
            <person name="Lei T."/>
            <person name="Chen C.-S."/>
            <person name="Chen H.-C."/>
            <person name="Xu Z."/>
            <person name="Li H."/>
            <person name="Huang H."/>
            <person name="Zhang F."/>
            <person name="Xu H."/>
            <person name="Li N."/>
            <person name="Zhao C."/>
            <person name="Li S."/>
            <person name="Dong L."/>
            <person name="Huang Y."/>
            <person name="Li L."/>
            <person name="Xi Y."/>
            <person name="Qi Q."/>
            <person name="Li W."/>
            <person name="Zhang B."/>
            <person name="Hu W."/>
            <person name="Zhang Y."/>
            <person name="Tian X."/>
            <person name="Jiao Y."/>
            <person name="Liang X."/>
            <person name="Jin J."/>
            <person name="Gao L."/>
            <person name="Zheng W."/>
            <person name="Hao B."/>
            <person name="Liu S.-M."/>
            <person name="Wang W."/>
            <person name="Yuan L."/>
            <person name="Cao M."/>
            <person name="McDermott J."/>
            <person name="Samudrala R."/>
            <person name="Wang J."/>
            <person name="Wong G.K.-S."/>
            <person name="Yang H."/>
        </authorList>
    </citation>
    <scope>NUCLEOTIDE SEQUENCE [LARGE SCALE GENOMIC DNA]</scope>
    <source>
        <strain>cv. Nipponbare</strain>
    </source>
</reference>
<reference key="6">
    <citation type="journal article" date="2003" name="Science">
        <title>Collection, mapping, and annotation of over 28,000 cDNA clones from japonica rice.</title>
        <authorList>
            <consortium name="The rice full-length cDNA consortium"/>
        </authorList>
    </citation>
    <scope>NUCLEOTIDE SEQUENCE [LARGE SCALE MRNA]</scope>
    <source>
        <strain>cv. Nipponbare</strain>
    </source>
</reference>
<reference key="7">
    <citation type="journal article" date="2009" name="J. Integr. Plant Biol.">
        <title>Regulation of OsSPX1 and OsSPX3 on expression of OsSPX domain genes and Pi-starvation signaling in rice.</title>
        <authorList>
            <person name="Wang Z."/>
            <person name="Hu H."/>
            <person name="Huang H."/>
            <person name="Duan K."/>
            <person name="Wu Z."/>
            <person name="Wu P."/>
        </authorList>
    </citation>
    <scope>FUNCTION</scope>
    <scope>TISSUE SPECIFICITY</scope>
    <scope>SUBCELLULAR LOCATION</scope>
    <scope>INDUCTION BY PHOSPHATE</scope>
</reference>
<reference key="8">
    <citation type="journal article" date="2009" name="Plant Biotechnol. J.">
        <title>Increased expression of OsSPX1 enhances cold/subfreezing tolerance in tobacco and Arabidopsis thaliana.</title>
        <authorList>
            <person name="Zhao L."/>
            <person name="Liu F."/>
            <person name="Xu W."/>
            <person name="Di C."/>
            <person name="Zhou S."/>
            <person name="Xue Y."/>
            <person name="Yu J."/>
            <person name="Su Z."/>
        </authorList>
    </citation>
    <scope>GENE FAMILY</scope>
    <scope>NOMENCLATURE</scope>
    <scope>INDUCTION BY COLD</scope>
</reference>
<reference key="9">
    <citation type="journal article" date="2014" name="J. Exp. Bot.">
        <title>The paralogous SPX3 and SPX5 genes redundantly modulate Pi homeostasis in rice.</title>
        <authorList>
            <person name="Shi J."/>
            <person name="Hu H."/>
            <person name="Zhang K."/>
            <person name="Zhang W."/>
            <person name="Yu Y."/>
            <person name="Wu Z."/>
            <person name="Wu P."/>
        </authorList>
    </citation>
    <scope>SUBCELLULAR LOCATION</scope>
    <scope>INDUCTION BY PHOSPHATE</scope>
    <scope>SUBUNIT</scope>
    <scope>TISSUE SPECIFICITY</scope>
    <scope>DISRUPTION PHENOTYPE</scope>
</reference>
<protein>
    <recommendedName>
        <fullName>SPX domain-containing protein 3</fullName>
    </recommendedName>
    <alternativeName>
        <fullName>Protein SPX DOMAIN GENE 3</fullName>
        <shortName>OsSPX3</shortName>
    </alternativeName>
</protein>
<sequence>MKFGKRLKKQVEESLPEWRDKFLAYKRLKKLVRLVSSSSGDVGGGGGGEAEFVRLLDGEVDRINAFFLEQEEEFVIRQRELQETVEKVAGGGGGGRRPAAAEMRRVRKEIVDLHGEMVLLLNYSAVNYTGLAKILKKYDKRTGRLLRLPFIEKVLRQPFFTTELISRLVRDCEATMEAIFTSSVATTAMAGDRRTWKGCSGDAGMAPMADQQGIFRNTVAALATMKELRSGSSTYGRFSLPPMAAPASPESDVLQSIRSDPHLKENGRIPSLQFFYA</sequence>
<keyword id="KW-0963">Cytoplasm</keyword>
<keyword id="KW-0539">Nucleus</keyword>
<keyword id="KW-1185">Reference proteome</keyword>
<accession>Q7XEY9</accession>
<accession>A0A0P0XU27</accession>
<comment type="function">
    <text evidence="3 4">Functional repressor of PHR2 (PubMed:24368504). Involved in maintaining cellular Pi homeostasis when plants are exposed to an external change in Pi (PubMed:24368504). Negatively regulates root-to-shoot Pi translocation redundantly with SPX3 (PubMed:24368504). Down-regulates the non-coding RNA IPS1 (At3g09922) and suppresses the responses of miR399 and PHO2 to Pi-starvation (PubMed:19566645).</text>
</comment>
<comment type="subunit">
    <text evidence="4">Homo- and heterodimers with SPX5.</text>
</comment>
<comment type="subcellular location">
    <subcellularLocation>
        <location evidence="4">Nucleus</location>
    </subcellularLocation>
    <subcellularLocation>
        <location evidence="3 4">Cytoplasm</location>
    </subcellularLocation>
</comment>
<comment type="tissue specificity">
    <text evidence="3 4">Predominantly expressed in roots, leaves and seeds (PubMed:19566645). Expressed in root epidermis, exodermis, sclerenchymal layer, cortex and endosperm (PubMed:24368504). Under Pi starvation, also detected in mesophyll and phloem in the vascular bundles (PubMed:24368504).</text>
</comment>
<comment type="induction">
    <text evidence="2 3 4">Up-regulated under phosphate starvation (PubMed:19566645, PubMed:24368504). Up-regulated during cold stress (PubMed:19508276).</text>
</comment>
<comment type="disruption phenotype">
    <text evidence="4">No visible phenotype, due to the redundancy with SPX5.</text>
</comment>
<dbReference type="EMBL" id="DP000086">
    <property type="protein sequence ID" value="AAP53570.1"/>
    <property type="molecule type" value="Genomic_DNA"/>
</dbReference>
<dbReference type="EMBL" id="AP008216">
    <property type="protein sequence ID" value="BAF26429.1"/>
    <property type="molecule type" value="Genomic_DNA"/>
</dbReference>
<dbReference type="EMBL" id="AP014966">
    <property type="protein sequence ID" value="BAT10679.1"/>
    <property type="molecule type" value="Genomic_DNA"/>
</dbReference>
<dbReference type="EMBL" id="CM000147">
    <property type="protein sequence ID" value="EAZ15953.1"/>
    <property type="molecule type" value="Genomic_DNA"/>
</dbReference>
<dbReference type="EMBL" id="AK108539">
    <property type="protein sequence ID" value="BAG98434.1"/>
    <property type="molecule type" value="mRNA"/>
</dbReference>
<dbReference type="RefSeq" id="XP_015614909.1">
    <property type="nucleotide sequence ID" value="XM_015759423.1"/>
</dbReference>
<dbReference type="SMR" id="Q7XEY9"/>
<dbReference type="FunCoup" id="Q7XEY9">
    <property type="interactions" value="3"/>
</dbReference>
<dbReference type="STRING" id="39947.Q7XEY9"/>
<dbReference type="PaxDb" id="39947-Q7XEY9"/>
<dbReference type="EnsemblPlants" id="Os10t0392600-01">
    <property type="protein sequence ID" value="Os10t0392600-01"/>
    <property type="gene ID" value="Os10g0392600"/>
</dbReference>
<dbReference type="Gramene" id="Os10t0392600-01">
    <property type="protein sequence ID" value="Os10t0392600-01"/>
    <property type="gene ID" value="Os10g0392600"/>
</dbReference>
<dbReference type="KEGG" id="dosa:Os10g0392600"/>
<dbReference type="eggNOG" id="KOG1161">
    <property type="taxonomic scope" value="Eukaryota"/>
</dbReference>
<dbReference type="HOGENOM" id="CLU_057600_1_1_1"/>
<dbReference type="InParanoid" id="Q7XEY9"/>
<dbReference type="OMA" id="LAFVHFY"/>
<dbReference type="OrthoDB" id="6493944at2759"/>
<dbReference type="Proteomes" id="UP000000763">
    <property type="component" value="Chromosome 10"/>
</dbReference>
<dbReference type="Proteomes" id="UP000007752">
    <property type="component" value="Chromosome 10"/>
</dbReference>
<dbReference type="Proteomes" id="UP000059680">
    <property type="component" value="Chromosome 10"/>
</dbReference>
<dbReference type="GO" id="GO:0005737">
    <property type="term" value="C:cytoplasm"/>
    <property type="evidence" value="ECO:0007669"/>
    <property type="project" value="UniProtKB-SubCell"/>
</dbReference>
<dbReference type="GO" id="GO:0005634">
    <property type="term" value="C:nucleus"/>
    <property type="evidence" value="ECO:0007669"/>
    <property type="project" value="UniProtKB-SubCell"/>
</dbReference>
<dbReference type="GO" id="GO:0070417">
    <property type="term" value="P:cellular response to cold"/>
    <property type="evidence" value="ECO:0000270"/>
    <property type="project" value="UniProtKB"/>
</dbReference>
<dbReference type="GO" id="GO:0016036">
    <property type="term" value="P:cellular response to phosphate starvation"/>
    <property type="evidence" value="ECO:0007669"/>
    <property type="project" value="InterPro"/>
</dbReference>
<dbReference type="CDD" id="cd14481">
    <property type="entry name" value="SPX_AtSPX1_like"/>
    <property type="match status" value="1"/>
</dbReference>
<dbReference type="InterPro" id="IPR004331">
    <property type="entry name" value="SPX_dom"/>
</dbReference>
<dbReference type="InterPro" id="IPR031142">
    <property type="entry name" value="SPX_prot"/>
</dbReference>
<dbReference type="PANTHER" id="PTHR45978">
    <property type="entry name" value="SPX DOMAIN-CONTAINING PROTEIN 3"/>
    <property type="match status" value="1"/>
</dbReference>
<dbReference type="PANTHER" id="PTHR45978:SF2">
    <property type="entry name" value="SPX DOMAIN-CONTAINING PROTEIN 3"/>
    <property type="match status" value="1"/>
</dbReference>
<dbReference type="Pfam" id="PF03105">
    <property type="entry name" value="SPX"/>
    <property type="match status" value="2"/>
</dbReference>
<dbReference type="PROSITE" id="PS51382">
    <property type="entry name" value="SPX"/>
    <property type="match status" value="1"/>
</dbReference>
<evidence type="ECO:0000255" key="1">
    <source>
        <dbReference type="PROSITE-ProRule" id="PRU00714"/>
    </source>
</evidence>
<evidence type="ECO:0000269" key="2">
    <source>
    </source>
</evidence>
<evidence type="ECO:0000269" key="3">
    <source>
    </source>
</evidence>
<evidence type="ECO:0000269" key="4">
    <source>
    </source>
</evidence>